<evidence type="ECO:0000255" key="1">
    <source>
        <dbReference type="PROSITE-ProRule" id="PRU00175"/>
    </source>
</evidence>
<evidence type="ECO:0000256" key="2">
    <source>
        <dbReference type="SAM" id="MobiDB-lite"/>
    </source>
</evidence>
<evidence type="ECO:0000269" key="3">
    <source>
    </source>
</evidence>
<evidence type="ECO:0000269" key="4">
    <source>
    </source>
</evidence>
<feature type="chain" id="PRO_0000056334" description="Uncharacterized RING finger protein P4H10.07">
    <location>
        <begin position="1"/>
        <end position="583"/>
    </location>
</feature>
<feature type="zinc finger region" description="RING-type" evidence="1">
    <location>
        <begin position="525"/>
        <end position="568"/>
    </location>
</feature>
<feature type="region of interest" description="Disordered" evidence="2">
    <location>
        <begin position="1"/>
        <end position="39"/>
    </location>
</feature>
<feature type="region of interest" description="Disordered" evidence="2">
    <location>
        <begin position="53"/>
        <end position="124"/>
    </location>
</feature>
<feature type="region of interest" description="Disordered" evidence="2">
    <location>
        <begin position="156"/>
        <end position="197"/>
    </location>
</feature>
<feature type="region of interest" description="Disordered" evidence="2">
    <location>
        <begin position="362"/>
        <end position="452"/>
    </location>
</feature>
<feature type="compositionally biased region" description="Polar residues" evidence="2">
    <location>
        <begin position="1"/>
        <end position="38"/>
    </location>
</feature>
<feature type="compositionally biased region" description="Basic and acidic residues" evidence="2">
    <location>
        <begin position="70"/>
        <end position="80"/>
    </location>
</feature>
<feature type="compositionally biased region" description="Low complexity" evidence="2">
    <location>
        <begin position="88"/>
        <end position="102"/>
    </location>
</feature>
<feature type="compositionally biased region" description="Polar residues" evidence="2">
    <location>
        <begin position="156"/>
        <end position="165"/>
    </location>
</feature>
<feature type="compositionally biased region" description="Polar residues" evidence="2">
    <location>
        <begin position="172"/>
        <end position="191"/>
    </location>
</feature>
<feature type="compositionally biased region" description="Polar residues" evidence="2">
    <location>
        <begin position="384"/>
        <end position="408"/>
    </location>
</feature>
<feature type="compositionally biased region" description="Polar residues" evidence="2">
    <location>
        <begin position="420"/>
        <end position="452"/>
    </location>
</feature>
<feature type="modified residue" description="Phosphoserine" evidence="4">
    <location>
        <position position="580"/>
    </location>
</feature>
<organism>
    <name type="scientific">Schizosaccharomyces pombe (strain 972 / ATCC 24843)</name>
    <name type="common">Fission yeast</name>
    <dbReference type="NCBI Taxonomy" id="284812"/>
    <lineage>
        <taxon>Eukaryota</taxon>
        <taxon>Fungi</taxon>
        <taxon>Dikarya</taxon>
        <taxon>Ascomycota</taxon>
        <taxon>Taphrinomycotina</taxon>
        <taxon>Schizosaccharomycetes</taxon>
        <taxon>Schizosaccharomycetales</taxon>
        <taxon>Schizosaccharomycetaceae</taxon>
        <taxon>Schizosaccharomyces</taxon>
    </lineage>
</organism>
<accession>Q9P7E1</accession>
<accession>Q9UTY9</accession>
<gene>
    <name type="ORF">SPBP4H10.07</name>
</gene>
<dbReference type="EMBL" id="CU329671">
    <property type="protein sequence ID" value="CAB83165.1"/>
    <property type="molecule type" value="Genomic_DNA"/>
</dbReference>
<dbReference type="EMBL" id="AB027922">
    <property type="protein sequence ID" value="BAA87226.1"/>
    <property type="molecule type" value="Genomic_DNA"/>
</dbReference>
<dbReference type="RefSeq" id="NP_596181.1">
    <property type="nucleotide sequence ID" value="NM_001022100.2"/>
</dbReference>
<dbReference type="BioGRID" id="277816">
    <property type="interactions" value="2"/>
</dbReference>
<dbReference type="FunCoup" id="Q9P7E1">
    <property type="interactions" value="419"/>
</dbReference>
<dbReference type="STRING" id="284812.Q9P7E1"/>
<dbReference type="iPTMnet" id="Q9P7E1"/>
<dbReference type="PaxDb" id="4896-SPBP4H10.07.1"/>
<dbReference type="EnsemblFungi" id="SPBP4H10.07.1">
    <property type="protein sequence ID" value="SPBP4H10.07.1:pep"/>
    <property type="gene ID" value="SPBP4H10.07"/>
</dbReference>
<dbReference type="KEGG" id="spo:2541304"/>
<dbReference type="PomBase" id="SPBP4H10.07"/>
<dbReference type="VEuPathDB" id="FungiDB:SPBP4H10.07"/>
<dbReference type="eggNOG" id="KOG0800">
    <property type="taxonomic scope" value="Eukaryota"/>
</dbReference>
<dbReference type="HOGENOM" id="CLU_467810_0_0_1"/>
<dbReference type="InParanoid" id="Q9P7E1"/>
<dbReference type="OMA" id="PRSWAIY"/>
<dbReference type="PhylomeDB" id="Q9P7E1"/>
<dbReference type="PRO" id="PR:Q9P7E1"/>
<dbReference type="Proteomes" id="UP000002485">
    <property type="component" value="Chromosome II"/>
</dbReference>
<dbReference type="GO" id="GO:0005737">
    <property type="term" value="C:cytoplasm"/>
    <property type="evidence" value="ECO:0000318"/>
    <property type="project" value="GO_Central"/>
</dbReference>
<dbReference type="GO" id="GO:0005789">
    <property type="term" value="C:endoplasmic reticulum membrane"/>
    <property type="evidence" value="ECO:0000250"/>
    <property type="project" value="PomBase"/>
</dbReference>
<dbReference type="GO" id="GO:0061630">
    <property type="term" value="F:ubiquitin protein ligase activity"/>
    <property type="evidence" value="ECO:0000318"/>
    <property type="project" value="GO_Central"/>
</dbReference>
<dbReference type="GO" id="GO:0008270">
    <property type="term" value="F:zinc ion binding"/>
    <property type="evidence" value="ECO:0000255"/>
    <property type="project" value="PomBase"/>
</dbReference>
<dbReference type="GO" id="GO:0006511">
    <property type="term" value="P:ubiquitin-dependent protein catabolic process"/>
    <property type="evidence" value="ECO:0000318"/>
    <property type="project" value="GO_Central"/>
</dbReference>
<dbReference type="CDD" id="cd16461">
    <property type="entry name" value="RING-H2_EL5-like"/>
    <property type="match status" value="1"/>
</dbReference>
<dbReference type="Gene3D" id="3.30.40.10">
    <property type="entry name" value="Zinc/RING finger domain, C3HC4 (zinc finger)"/>
    <property type="match status" value="1"/>
</dbReference>
<dbReference type="InterPro" id="IPR001841">
    <property type="entry name" value="Znf_RING"/>
</dbReference>
<dbReference type="InterPro" id="IPR013083">
    <property type="entry name" value="Znf_RING/FYVE/PHD"/>
</dbReference>
<dbReference type="PANTHER" id="PTHR45676">
    <property type="entry name" value="RING-H2 FINGER PROTEIN ATL51-RELATED"/>
    <property type="match status" value="1"/>
</dbReference>
<dbReference type="PANTHER" id="PTHR45676:SF41">
    <property type="entry name" value="RING-H2 FINGER PROTEIN ATL66"/>
    <property type="match status" value="1"/>
</dbReference>
<dbReference type="Pfam" id="PF13639">
    <property type="entry name" value="zf-RING_2"/>
    <property type="match status" value="1"/>
</dbReference>
<dbReference type="SMART" id="SM00184">
    <property type="entry name" value="RING"/>
    <property type="match status" value="1"/>
</dbReference>
<dbReference type="SUPFAM" id="SSF57850">
    <property type="entry name" value="RING/U-box"/>
    <property type="match status" value="1"/>
</dbReference>
<dbReference type="PROSITE" id="PS50089">
    <property type="entry name" value="ZF_RING_2"/>
    <property type="match status" value="1"/>
</dbReference>
<protein>
    <recommendedName>
        <fullName>Uncharacterized RING finger protein P4H10.07</fullName>
    </recommendedName>
</protein>
<name>YOF7_SCHPO</name>
<keyword id="KW-0472">Membrane</keyword>
<keyword id="KW-0479">Metal-binding</keyword>
<keyword id="KW-0597">Phosphoprotein</keyword>
<keyword id="KW-1185">Reference proteome</keyword>
<keyword id="KW-0862">Zinc</keyword>
<keyword id="KW-0863">Zinc-finger</keyword>
<comment type="subcellular location">
    <subcellularLocation>
        <location evidence="3">Membrane</location>
    </subcellularLocation>
</comment>
<reference key="1">
    <citation type="journal article" date="2002" name="Nature">
        <title>The genome sequence of Schizosaccharomyces pombe.</title>
        <authorList>
            <person name="Wood V."/>
            <person name="Gwilliam R."/>
            <person name="Rajandream M.A."/>
            <person name="Lyne M.H."/>
            <person name="Lyne R."/>
            <person name="Stewart A."/>
            <person name="Sgouros J.G."/>
            <person name="Peat N."/>
            <person name="Hayles J."/>
            <person name="Baker S.G."/>
            <person name="Basham D."/>
            <person name="Bowman S."/>
            <person name="Brooks K."/>
            <person name="Brown D."/>
            <person name="Brown S."/>
            <person name="Chillingworth T."/>
            <person name="Churcher C.M."/>
            <person name="Collins M."/>
            <person name="Connor R."/>
            <person name="Cronin A."/>
            <person name="Davis P."/>
            <person name="Feltwell T."/>
            <person name="Fraser A."/>
            <person name="Gentles S."/>
            <person name="Goble A."/>
            <person name="Hamlin N."/>
            <person name="Harris D.E."/>
            <person name="Hidalgo J."/>
            <person name="Hodgson G."/>
            <person name="Holroyd S."/>
            <person name="Hornsby T."/>
            <person name="Howarth S."/>
            <person name="Huckle E.J."/>
            <person name="Hunt S."/>
            <person name="Jagels K."/>
            <person name="James K.D."/>
            <person name="Jones L."/>
            <person name="Jones M."/>
            <person name="Leather S."/>
            <person name="McDonald S."/>
            <person name="McLean J."/>
            <person name="Mooney P."/>
            <person name="Moule S."/>
            <person name="Mungall K.L."/>
            <person name="Murphy L.D."/>
            <person name="Niblett D."/>
            <person name="Odell C."/>
            <person name="Oliver K."/>
            <person name="O'Neil S."/>
            <person name="Pearson D."/>
            <person name="Quail M.A."/>
            <person name="Rabbinowitsch E."/>
            <person name="Rutherford K.M."/>
            <person name="Rutter S."/>
            <person name="Saunders D."/>
            <person name="Seeger K."/>
            <person name="Sharp S."/>
            <person name="Skelton J."/>
            <person name="Simmonds M.N."/>
            <person name="Squares R."/>
            <person name="Squares S."/>
            <person name="Stevens K."/>
            <person name="Taylor K."/>
            <person name="Taylor R.G."/>
            <person name="Tivey A."/>
            <person name="Walsh S.V."/>
            <person name="Warren T."/>
            <person name="Whitehead S."/>
            <person name="Woodward J.R."/>
            <person name="Volckaert G."/>
            <person name="Aert R."/>
            <person name="Robben J."/>
            <person name="Grymonprez B."/>
            <person name="Weltjens I."/>
            <person name="Vanstreels E."/>
            <person name="Rieger M."/>
            <person name="Schaefer M."/>
            <person name="Mueller-Auer S."/>
            <person name="Gabel C."/>
            <person name="Fuchs M."/>
            <person name="Duesterhoeft A."/>
            <person name="Fritzc C."/>
            <person name="Holzer E."/>
            <person name="Moestl D."/>
            <person name="Hilbert H."/>
            <person name="Borzym K."/>
            <person name="Langer I."/>
            <person name="Beck A."/>
            <person name="Lehrach H."/>
            <person name="Reinhardt R."/>
            <person name="Pohl T.M."/>
            <person name="Eger P."/>
            <person name="Zimmermann W."/>
            <person name="Wedler H."/>
            <person name="Wambutt R."/>
            <person name="Purnelle B."/>
            <person name="Goffeau A."/>
            <person name="Cadieu E."/>
            <person name="Dreano S."/>
            <person name="Gloux S."/>
            <person name="Lelaure V."/>
            <person name="Mottier S."/>
            <person name="Galibert F."/>
            <person name="Aves S.J."/>
            <person name="Xiang Z."/>
            <person name="Hunt C."/>
            <person name="Moore K."/>
            <person name="Hurst S.M."/>
            <person name="Lucas M."/>
            <person name="Rochet M."/>
            <person name="Gaillardin C."/>
            <person name="Tallada V.A."/>
            <person name="Garzon A."/>
            <person name="Thode G."/>
            <person name="Daga R.R."/>
            <person name="Cruzado L."/>
            <person name="Jimenez J."/>
            <person name="Sanchez M."/>
            <person name="del Rey F."/>
            <person name="Benito J."/>
            <person name="Dominguez A."/>
            <person name="Revuelta J.L."/>
            <person name="Moreno S."/>
            <person name="Armstrong J."/>
            <person name="Forsburg S.L."/>
            <person name="Cerutti L."/>
            <person name="Lowe T."/>
            <person name="McCombie W.R."/>
            <person name="Paulsen I."/>
            <person name="Potashkin J."/>
            <person name="Shpakovski G.V."/>
            <person name="Ussery D."/>
            <person name="Barrell B.G."/>
            <person name="Nurse P."/>
        </authorList>
    </citation>
    <scope>NUCLEOTIDE SEQUENCE [LARGE SCALE GENOMIC DNA]</scope>
    <source>
        <strain>972 / ATCC 24843</strain>
    </source>
</reference>
<reference key="2">
    <citation type="journal article" date="2000" name="Genes Cells">
        <title>Large-scale screening of intracellular protein localization in living fission yeast cells by the use of a GFP-fusion genomic DNA library.</title>
        <authorList>
            <person name="Ding D.-Q."/>
            <person name="Tomita Y."/>
            <person name="Yamamoto A."/>
            <person name="Chikashige Y."/>
            <person name="Haraguchi T."/>
            <person name="Hiraoka Y."/>
        </authorList>
    </citation>
    <scope>NUCLEOTIDE SEQUENCE [LARGE SCALE GENOMIC DNA] OF 1-182</scope>
    <scope>SUBCELLULAR LOCATION</scope>
    <source>
        <strain>ATCC 38364 / 968</strain>
    </source>
</reference>
<reference key="3">
    <citation type="journal article" date="2008" name="J. Proteome Res.">
        <title>Phosphoproteome analysis of fission yeast.</title>
        <authorList>
            <person name="Wilson-Grady J.T."/>
            <person name="Villen J."/>
            <person name="Gygi S.P."/>
        </authorList>
    </citation>
    <scope>PHOSPHORYLATION [LARGE SCALE ANALYSIS] AT SER-580</scope>
    <scope>IDENTIFICATION BY MASS SPECTROMETRY</scope>
</reference>
<proteinExistence type="evidence at protein level"/>
<sequence>MGQGESIPSRQIQRDASMQAVSSESENINDSDRQNSGFSRLWNRFPSLQRVLGLRRAKRHRNDEGNSENGNRDRTTERSAFRSRYRGSLLNRNSPSLRSLSPPATPATPRSRIEGESQTSAIPQTDRLILENHQQEFERAARRFRSSIAALRNLNTQNNQSTLASNHEDENVSSSGGQEMQDHGSVNNLESPGTAIGRLPVRSVTSLADSNMEDYTRAVMNYINNSENTQQASVSPEESQLVMLSRFVFSVASGWVSVLMNSSSAHQSNNLEFPSSISGNVESGNVAFDEFLSLLHAGNLVQAMNAETNPRTAELIANAVDLEEESGPINLFRTFRFDNLHRNHEGQEVIPIIIVGIRSLRNSGSDEDDQPSADSPTLMHPSDLISSLVNSQNQTTSVSDNTGPNENVNEAEHISEDEQASTATDVNGISDNNGSSTQQAPETRNNNSQTDHQLPRSWAIYVREAFVPQNHPVLRAPSLFTDSPTYEDMLLLNSIIGIEKPPVASQKDLEKAGGVFPFSGTDERCLVCLSNFELNDECRRLKQCNHFFHRECIDQWLTSSQNSCPLCRTKGVASASTPSSPKP</sequence>